<evidence type="ECO:0000250" key="1"/>
<evidence type="ECO:0000255" key="2">
    <source>
        <dbReference type="PROSITE-ProRule" id="PRU00520"/>
    </source>
</evidence>
<evidence type="ECO:0000269" key="3">
    <source ref="1"/>
</evidence>
<evidence type="ECO:0000305" key="4"/>
<feature type="initiator methionine" description="Removed" evidence="1">
    <location>
        <position position="1"/>
    </location>
</feature>
<feature type="chain" id="PRO_0000158547" description="Acylphosphatase-2">
    <location>
        <begin position="2"/>
        <end position="103"/>
    </location>
</feature>
<feature type="domain" description="Acylphosphatase-like" evidence="2">
    <location>
        <begin position="13"/>
        <end position="103"/>
    </location>
</feature>
<feature type="active site" evidence="2">
    <location>
        <position position="28"/>
    </location>
</feature>
<feature type="active site" evidence="2">
    <location>
        <position position="46"/>
    </location>
</feature>
<feature type="modified residue" description="N-acetylserine" evidence="3">
    <location>
        <position position="2"/>
    </location>
</feature>
<keyword id="KW-0007">Acetylation</keyword>
<keyword id="KW-0903">Direct protein sequencing</keyword>
<keyword id="KW-0378">Hydrolase</keyword>
<dbReference type="EC" id="3.6.1.7"/>
<dbReference type="PIR" id="A45675">
    <property type="entry name" value="A45675"/>
</dbReference>
<dbReference type="SMR" id="P14620"/>
<dbReference type="Proteomes" id="UP000694400">
    <property type="component" value="Unplaced"/>
</dbReference>
<dbReference type="GO" id="GO:0003998">
    <property type="term" value="F:acylphosphatase activity"/>
    <property type="evidence" value="ECO:0007669"/>
    <property type="project" value="UniProtKB-EC"/>
</dbReference>
<dbReference type="FunFam" id="3.30.70.100:FF:000011">
    <property type="entry name" value="Acylphosphatase"/>
    <property type="match status" value="1"/>
</dbReference>
<dbReference type="Gene3D" id="3.30.70.100">
    <property type="match status" value="1"/>
</dbReference>
<dbReference type="InterPro" id="IPR020456">
    <property type="entry name" value="Acylphosphatase"/>
</dbReference>
<dbReference type="InterPro" id="IPR001792">
    <property type="entry name" value="Acylphosphatase-like_dom"/>
</dbReference>
<dbReference type="InterPro" id="IPR036046">
    <property type="entry name" value="Acylphosphatase-like_dom_sf"/>
</dbReference>
<dbReference type="InterPro" id="IPR017968">
    <property type="entry name" value="Acylphosphatase_CS"/>
</dbReference>
<dbReference type="PANTHER" id="PTHR10029">
    <property type="entry name" value="ACYLPHOSPHATASE"/>
    <property type="match status" value="1"/>
</dbReference>
<dbReference type="PANTHER" id="PTHR10029:SF20">
    <property type="entry name" value="ACYLPHOSPHATASE-2"/>
    <property type="match status" value="1"/>
</dbReference>
<dbReference type="Pfam" id="PF00708">
    <property type="entry name" value="Acylphosphatase"/>
    <property type="match status" value="1"/>
</dbReference>
<dbReference type="PRINTS" id="PR00112">
    <property type="entry name" value="ACYLPHPHTASE"/>
</dbReference>
<dbReference type="SUPFAM" id="SSF54975">
    <property type="entry name" value="Acylphosphatase/BLUF domain-like"/>
    <property type="match status" value="1"/>
</dbReference>
<dbReference type="PROSITE" id="PS00150">
    <property type="entry name" value="ACYLPHOSPHATASE_1"/>
    <property type="match status" value="1"/>
</dbReference>
<dbReference type="PROSITE" id="PS00151">
    <property type="entry name" value="ACYLPHOSPHATASE_2"/>
    <property type="match status" value="1"/>
</dbReference>
<dbReference type="PROSITE" id="PS51160">
    <property type="entry name" value="ACYLPHOSPHATASE_3"/>
    <property type="match status" value="1"/>
</dbReference>
<organism>
    <name type="scientific">Anas platyrhynchos</name>
    <name type="common">Mallard</name>
    <name type="synonym">Anas boschas</name>
    <dbReference type="NCBI Taxonomy" id="8839"/>
    <lineage>
        <taxon>Eukaryota</taxon>
        <taxon>Metazoa</taxon>
        <taxon>Chordata</taxon>
        <taxon>Craniata</taxon>
        <taxon>Vertebrata</taxon>
        <taxon>Euteleostomi</taxon>
        <taxon>Archelosauria</taxon>
        <taxon>Archosauria</taxon>
        <taxon>Dinosauria</taxon>
        <taxon>Saurischia</taxon>
        <taxon>Theropoda</taxon>
        <taxon>Coelurosauria</taxon>
        <taxon>Aves</taxon>
        <taxon>Neognathae</taxon>
        <taxon>Galloanserae</taxon>
        <taxon>Anseriformes</taxon>
        <taxon>Anatidae</taxon>
        <taxon>Anatinae</taxon>
        <taxon>Anas</taxon>
    </lineage>
</organism>
<gene>
    <name type="primary">ACYP2</name>
</gene>
<comment type="function">
    <text>Its physiological role is not yet clear.</text>
</comment>
<comment type="catalytic activity">
    <reaction>
        <text>an acyl phosphate + H2O = a carboxylate + phosphate + H(+)</text>
        <dbReference type="Rhea" id="RHEA:14965"/>
        <dbReference type="ChEBI" id="CHEBI:15377"/>
        <dbReference type="ChEBI" id="CHEBI:15378"/>
        <dbReference type="ChEBI" id="CHEBI:29067"/>
        <dbReference type="ChEBI" id="CHEBI:43474"/>
        <dbReference type="ChEBI" id="CHEBI:59918"/>
        <dbReference type="EC" id="3.6.1.7"/>
    </reaction>
</comment>
<comment type="similarity">
    <text evidence="4">Belongs to the acylphosphatase family.</text>
</comment>
<accession>P14620</accession>
<proteinExistence type="evidence at protein level"/>
<reference key="1">
    <citation type="journal article" date="1986" name="J. Protein Chem.">
        <title>Duck skeletal muscle acylphosphatase: primary structure.</title>
        <authorList>
            <person name="Stefani M."/>
            <person name="Modesti A."/>
            <person name="Camici G."/>
            <person name="Manao G."/>
            <person name="Cappugi G."/>
            <person name="Berti A."/>
            <person name="Ramponi G."/>
        </authorList>
    </citation>
    <scope>PROTEIN SEQUENCE OF 2-103</scope>
    <scope>ACETYLATION AT SER-2</scope>
    <source>
        <tissue>Skeletal muscle</tissue>
    </source>
</reference>
<sequence>MSTLGKAPGALKSVDYEVFGRVQGVCFRMYTEEEARKLGVVGWVKNTSQGTVTGQVQGPEDKVNAMKSWLTKVGSPSSRIDRTNFSNEKEISKLDFSGFSTRY</sequence>
<name>ACYP2_ANAPL</name>
<protein>
    <recommendedName>
        <fullName>Acylphosphatase-2</fullName>
        <ecNumber>3.6.1.7</ecNumber>
    </recommendedName>
    <alternativeName>
        <fullName>Acylphosphatase, muscle type isozyme</fullName>
    </alternativeName>
    <alternativeName>
        <fullName>Acylphosphate phosphohydrolase 2</fullName>
    </alternativeName>
</protein>